<feature type="chain" id="PRO_0000149415" description="Adenine phosphoribosyltransferase">
    <location>
        <begin position="1"/>
        <end position="180"/>
    </location>
</feature>
<accession>Q741P3</accession>
<keyword id="KW-0963">Cytoplasm</keyword>
<keyword id="KW-0328">Glycosyltransferase</keyword>
<keyword id="KW-0660">Purine salvage</keyword>
<keyword id="KW-1185">Reference proteome</keyword>
<keyword id="KW-0808">Transferase</keyword>
<sequence>MTDAGEATPVAELIASLTRQVPDFPKPGIQFKDLTPLFAEATAMTAVTGALARHASGADLVAGIDSRGFLVAAAVADRLHTGVLAIRKGGKLPPPVHAERYDLEYGSATLEIPADGIDLRGRRIVIIDDVLATGGTLAAAARLLRRTGATVTAAAVVFELGALGGRAALAPLPVHSLTCQ</sequence>
<protein>
    <recommendedName>
        <fullName evidence="1">Adenine phosphoribosyltransferase</fullName>
        <shortName evidence="1">APRT</shortName>
        <ecNumber evidence="1">2.4.2.7</ecNumber>
    </recommendedName>
</protein>
<name>APT_MYCPA</name>
<proteinExistence type="inferred from homology"/>
<reference key="1">
    <citation type="journal article" date="2005" name="Proc. Natl. Acad. Sci. U.S.A.">
        <title>The complete genome sequence of Mycobacterium avium subspecies paratuberculosis.</title>
        <authorList>
            <person name="Li L."/>
            <person name="Bannantine J.P."/>
            <person name="Zhang Q."/>
            <person name="Amonsin A."/>
            <person name="May B.J."/>
            <person name="Alt D."/>
            <person name="Banerji N."/>
            <person name="Kanjilal S."/>
            <person name="Kapur V."/>
        </authorList>
    </citation>
    <scope>NUCLEOTIDE SEQUENCE [LARGE SCALE GENOMIC DNA]</scope>
    <source>
        <strain>ATCC BAA-968 / K-10</strain>
    </source>
</reference>
<gene>
    <name evidence="1" type="primary">apt</name>
    <name type="ordered locus">MAP_1046</name>
</gene>
<organism>
    <name type="scientific">Mycolicibacterium paratuberculosis (strain ATCC BAA-968 / K-10)</name>
    <name type="common">Mycobacterium paratuberculosis</name>
    <dbReference type="NCBI Taxonomy" id="262316"/>
    <lineage>
        <taxon>Bacteria</taxon>
        <taxon>Bacillati</taxon>
        <taxon>Actinomycetota</taxon>
        <taxon>Actinomycetes</taxon>
        <taxon>Mycobacteriales</taxon>
        <taxon>Mycobacteriaceae</taxon>
        <taxon>Mycobacterium</taxon>
        <taxon>Mycobacterium avium complex (MAC)</taxon>
    </lineage>
</organism>
<evidence type="ECO:0000255" key="1">
    <source>
        <dbReference type="HAMAP-Rule" id="MF_00004"/>
    </source>
</evidence>
<comment type="function">
    <text evidence="1">Catalyzes a salvage reaction resulting in the formation of AMP, that is energically less costly than de novo synthesis.</text>
</comment>
<comment type="catalytic activity">
    <reaction evidence="1">
        <text>AMP + diphosphate = 5-phospho-alpha-D-ribose 1-diphosphate + adenine</text>
        <dbReference type="Rhea" id="RHEA:16609"/>
        <dbReference type="ChEBI" id="CHEBI:16708"/>
        <dbReference type="ChEBI" id="CHEBI:33019"/>
        <dbReference type="ChEBI" id="CHEBI:58017"/>
        <dbReference type="ChEBI" id="CHEBI:456215"/>
        <dbReference type="EC" id="2.4.2.7"/>
    </reaction>
</comment>
<comment type="pathway">
    <text evidence="1">Purine metabolism; AMP biosynthesis via salvage pathway; AMP from adenine: step 1/1.</text>
</comment>
<comment type="subunit">
    <text evidence="1">Homodimer.</text>
</comment>
<comment type="subcellular location">
    <subcellularLocation>
        <location evidence="1">Cytoplasm</location>
    </subcellularLocation>
</comment>
<comment type="similarity">
    <text evidence="1">Belongs to the purine/pyrimidine phosphoribosyltransferase family.</text>
</comment>
<dbReference type="EC" id="2.4.2.7" evidence="1"/>
<dbReference type="EMBL" id="AE016958">
    <property type="protein sequence ID" value="AAS03363.1"/>
    <property type="molecule type" value="Genomic_DNA"/>
</dbReference>
<dbReference type="RefSeq" id="WP_003872676.1">
    <property type="nucleotide sequence ID" value="NZ_CP106873.1"/>
</dbReference>
<dbReference type="SMR" id="Q741P3"/>
<dbReference type="STRING" id="262316.MAP_1046"/>
<dbReference type="KEGG" id="mpa:MAP_1046"/>
<dbReference type="eggNOG" id="COG0503">
    <property type="taxonomic scope" value="Bacteria"/>
</dbReference>
<dbReference type="HOGENOM" id="CLU_063339_3_3_11"/>
<dbReference type="UniPathway" id="UPA00588">
    <property type="reaction ID" value="UER00646"/>
</dbReference>
<dbReference type="Proteomes" id="UP000000580">
    <property type="component" value="Chromosome"/>
</dbReference>
<dbReference type="GO" id="GO:0005737">
    <property type="term" value="C:cytoplasm"/>
    <property type="evidence" value="ECO:0007669"/>
    <property type="project" value="UniProtKB-SubCell"/>
</dbReference>
<dbReference type="GO" id="GO:0002055">
    <property type="term" value="F:adenine binding"/>
    <property type="evidence" value="ECO:0007669"/>
    <property type="project" value="TreeGrafter"/>
</dbReference>
<dbReference type="GO" id="GO:0003999">
    <property type="term" value="F:adenine phosphoribosyltransferase activity"/>
    <property type="evidence" value="ECO:0007669"/>
    <property type="project" value="UniProtKB-UniRule"/>
</dbReference>
<dbReference type="GO" id="GO:0016208">
    <property type="term" value="F:AMP binding"/>
    <property type="evidence" value="ECO:0007669"/>
    <property type="project" value="TreeGrafter"/>
</dbReference>
<dbReference type="GO" id="GO:0006168">
    <property type="term" value="P:adenine salvage"/>
    <property type="evidence" value="ECO:0007669"/>
    <property type="project" value="InterPro"/>
</dbReference>
<dbReference type="GO" id="GO:0044209">
    <property type="term" value="P:AMP salvage"/>
    <property type="evidence" value="ECO:0007669"/>
    <property type="project" value="UniProtKB-UniRule"/>
</dbReference>
<dbReference type="GO" id="GO:0006166">
    <property type="term" value="P:purine ribonucleoside salvage"/>
    <property type="evidence" value="ECO:0007669"/>
    <property type="project" value="UniProtKB-KW"/>
</dbReference>
<dbReference type="CDD" id="cd06223">
    <property type="entry name" value="PRTases_typeI"/>
    <property type="match status" value="1"/>
</dbReference>
<dbReference type="FunFam" id="3.40.50.2020:FF:000021">
    <property type="entry name" value="Adenine phosphoribosyltransferase"/>
    <property type="match status" value="1"/>
</dbReference>
<dbReference type="Gene3D" id="3.40.50.2020">
    <property type="match status" value="1"/>
</dbReference>
<dbReference type="HAMAP" id="MF_00004">
    <property type="entry name" value="Aden_phosphoribosyltr"/>
    <property type="match status" value="1"/>
</dbReference>
<dbReference type="InterPro" id="IPR005764">
    <property type="entry name" value="Ade_phspho_trans"/>
</dbReference>
<dbReference type="InterPro" id="IPR000836">
    <property type="entry name" value="PRibTrfase_dom"/>
</dbReference>
<dbReference type="InterPro" id="IPR029057">
    <property type="entry name" value="PRTase-like"/>
</dbReference>
<dbReference type="InterPro" id="IPR050054">
    <property type="entry name" value="UPRTase/APRTase"/>
</dbReference>
<dbReference type="NCBIfam" id="NF002636">
    <property type="entry name" value="PRK02304.1-5"/>
    <property type="match status" value="1"/>
</dbReference>
<dbReference type="PANTHER" id="PTHR32315">
    <property type="entry name" value="ADENINE PHOSPHORIBOSYLTRANSFERASE"/>
    <property type="match status" value="1"/>
</dbReference>
<dbReference type="PANTHER" id="PTHR32315:SF3">
    <property type="entry name" value="ADENINE PHOSPHORIBOSYLTRANSFERASE"/>
    <property type="match status" value="1"/>
</dbReference>
<dbReference type="Pfam" id="PF00156">
    <property type="entry name" value="Pribosyltran"/>
    <property type="match status" value="1"/>
</dbReference>
<dbReference type="SUPFAM" id="SSF53271">
    <property type="entry name" value="PRTase-like"/>
    <property type="match status" value="1"/>
</dbReference>
<dbReference type="PROSITE" id="PS00103">
    <property type="entry name" value="PUR_PYR_PR_TRANSFER"/>
    <property type="match status" value="1"/>
</dbReference>